<gene>
    <name evidence="1" type="primary">rpsC</name>
    <name type="ordered locus">BceJ2315_02430</name>
    <name type="ORF">BCAL0240</name>
</gene>
<dbReference type="EMBL" id="AM747720">
    <property type="protein sequence ID" value="CAR50551.1"/>
    <property type="molecule type" value="Genomic_DNA"/>
</dbReference>
<dbReference type="RefSeq" id="WP_006482899.1">
    <property type="nucleotide sequence ID" value="NC_011000.1"/>
</dbReference>
<dbReference type="SMR" id="B4E5C6"/>
<dbReference type="GeneID" id="98107154"/>
<dbReference type="KEGG" id="bcj:BCAL0240"/>
<dbReference type="eggNOG" id="COG0092">
    <property type="taxonomic scope" value="Bacteria"/>
</dbReference>
<dbReference type="HOGENOM" id="CLU_058591_0_2_4"/>
<dbReference type="BioCyc" id="BCEN216591:G1G1V-283-MONOMER"/>
<dbReference type="Proteomes" id="UP000001035">
    <property type="component" value="Chromosome 1"/>
</dbReference>
<dbReference type="GO" id="GO:0022627">
    <property type="term" value="C:cytosolic small ribosomal subunit"/>
    <property type="evidence" value="ECO:0007669"/>
    <property type="project" value="TreeGrafter"/>
</dbReference>
<dbReference type="GO" id="GO:0003729">
    <property type="term" value="F:mRNA binding"/>
    <property type="evidence" value="ECO:0007669"/>
    <property type="project" value="UniProtKB-UniRule"/>
</dbReference>
<dbReference type="GO" id="GO:0019843">
    <property type="term" value="F:rRNA binding"/>
    <property type="evidence" value="ECO:0007669"/>
    <property type="project" value="UniProtKB-UniRule"/>
</dbReference>
<dbReference type="GO" id="GO:0003735">
    <property type="term" value="F:structural constituent of ribosome"/>
    <property type="evidence" value="ECO:0007669"/>
    <property type="project" value="InterPro"/>
</dbReference>
<dbReference type="GO" id="GO:0006412">
    <property type="term" value="P:translation"/>
    <property type="evidence" value="ECO:0007669"/>
    <property type="project" value="UniProtKB-UniRule"/>
</dbReference>
<dbReference type="CDD" id="cd02412">
    <property type="entry name" value="KH-II_30S_S3"/>
    <property type="match status" value="1"/>
</dbReference>
<dbReference type="FunFam" id="3.30.1140.32:FF:000006">
    <property type="entry name" value="30S ribosomal protein S3"/>
    <property type="match status" value="1"/>
</dbReference>
<dbReference type="FunFam" id="3.30.300.20:FF:000001">
    <property type="entry name" value="30S ribosomal protein S3"/>
    <property type="match status" value="1"/>
</dbReference>
<dbReference type="Gene3D" id="3.30.300.20">
    <property type="match status" value="1"/>
</dbReference>
<dbReference type="Gene3D" id="3.30.1140.32">
    <property type="entry name" value="Ribosomal protein S3, C-terminal domain"/>
    <property type="match status" value="1"/>
</dbReference>
<dbReference type="HAMAP" id="MF_01309_B">
    <property type="entry name" value="Ribosomal_uS3_B"/>
    <property type="match status" value="1"/>
</dbReference>
<dbReference type="InterPro" id="IPR004087">
    <property type="entry name" value="KH_dom"/>
</dbReference>
<dbReference type="InterPro" id="IPR015946">
    <property type="entry name" value="KH_dom-like_a/b"/>
</dbReference>
<dbReference type="InterPro" id="IPR004044">
    <property type="entry name" value="KH_dom_type_2"/>
</dbReference>
<dbReference type="InterPro" id="IPR009019">
    <property type="entry name" value="KH_sf_prok-type"/>
</dbReference>
<dbReference type="InterPro" id="IPR036419">
    <property type="entry name" value="Ribosomal_S3_C_sf"/>
</dbReference>
<dbReference type="InterPro" id="IPR005704">
    <property type="entry name" value="Ribosomal_uS3_bac-typ"/>
</dbReference>
<dbReference type="InterPro" id="IPR001351">
    <property type="entry name" value="Ribosomal_uS3_C"/>
</dbReference>
<dbReference type="InterPro" id="IPR018280">
    <property type="entry name" value="Ribosomal_uS3_CS"/>
</dbReference>
<dbReference type="NCBIfam" id="TIGR01009">
    <property type="entry name" value="rpsC_bact"/>
    <property type="match status" value="1"/>
</dbReference>
<dbReference type="PANTHER" id="PTHR11760">
    <property type="entry name" value="30S/40S RIBOSOMAL PROTEIN S3"/>
    <property type="match status" value="1"/>
</dbReference>
<dbReference type="PANTHER" id="PTHR11760:SF19">
    <property type="entry name" value="SMALL RIBOSOMAL SUBUNIT PROTEIN US3C"/>
    <property type="match status" value="1"/>
</dbReference>
<dbReference type="Pfam" id="PF07650">
    <property type="entry name" value="KH_2"/>
    <property type="match status" value="1"/>
</dbReference>
<dbReference type="Pfam" id="PF00189">
    <property type="entry name" value="Ribosomal_S3_C"/>
    <property type="match status" value="1"/>
</dbReference>
<dbReference type="SMART" id="SM00322">
    <property type="entry name" value="KH"/>
    <property type="match status" value="1"/>
</dbReference>
<dbReference type="SUPFAM" id="SSF54814">
    <property type="entry name" value="Prokaryotic type KH domain (KH-domain type II)"/>
    <property type="match status" value="1"/>
</dbReference>
<dbReference type="SUPFAM" id="SSF54821">
    <property type="entry name" value="Ribosomal protein S3 C-terminal domain"/>
    <property type="match status" value="1"/>
</dbReference>
<dbReference type="PROSITE" id="PS50823">
    <property type="entry name" value="KH_TYPE_2"/>
    <property type="match status" value="1"/>
</dbReference>
<dbReference type="PROSITE" id="PS00548">
    <property type="entry name" value="RIBOSOMAL_S3"/>
    <property type="match status" value="1"/>
</dbReference>
<name>RS3_BURCJ</name>
<comment type="function">
    <text evidence="1">Binds the lower part of the 30S subunit head. Binds mRNA in the 70S ribosome, positioning it for translation.</text>
</comment>
<comment type="subunit">
    <text evidence="1">Part of the 30S ribosomal subunit. Forms a tight complex with proteins S10 and S14.</text>
</comment>
<comment type="similarity">
    <text evidence="1">Belongs to the universal ribosomal protein uS3 family.</text>
</comment>
<accession>B4E5C6</accession>
<keyword id="KW-0687">Ribonucleoprotein</keyword>
<keyword id="KW-0689">Ribosomal protein</keyword>
<keyword id="KW-0694">RNA-binding</keyword>
<keyword id="KW-0699">rRNA-binding</keyword>
<protein>
    <recommendedName>
        <fullName evidence="1">Small ribosomal subunit protein uS3</fullName>
    </recommendedName>
    <alternativeName>
        <fullName evidence="3">30S ribosomal protein S3</fullName>
    </alternativeName>
</protein>
<sequence>MGQKIHPTGFRLAVSRNWASRWYANNNNFAAMLQEDIGVREYLKKKLKNASVGRVVIERPAKNARITIYSSRPGVVIGKKGEDIEQLKTELQRRMGVPVHVNIEEIRKPETDAQLIADSITQQLERRIMFRRAMKRAMQNAMRLGAQGIKIMSAGRLNGIEIARTEWYREGRVPLHTLRADIDYATSEAKTTYGIIGVKVWVYKGDTLGRNDAPVVEEVAEDKRPRRNARPGDRRPRRDGEGGAPGARRGAPRRGAGKPEDGKTGE</sequence>
<proteinExistence type="inferred from homology"/>
<feature type="chain" id="PRO_1000140932" description="Small ribosomal subunit protein uS3">
    <location>
        <begin position="1"/>
        <end position="266"/>
    </location>
</feature>
<feature type="domain" description="KH type-2" evidence="1">
    <location>
        <begin position="39"/>
        <end position="107"/>
    </location>
</feature>
<feature type="region of interest" description="Disordered" evidence="2">
    <location>
        <begin position="218"/>
        <end position="266"/>
    </location>
</feature>
<feature type="compositionally biased region" description="Basic and acidic residues" evidence="2">
    <location>
        <begin position="230"/>
        <end position="241"/>
    </location>
</feature>
<feature type="compositionally biased region" description="Basic and acidic residues" evidence="2">
    <location>
        <begin position="257"/>
        <end position="266"/>
    </location>
</feature>
<reference key="1">
    <citation type="journal article" date="2009" name="J. Bacteriol.">
        <title>The genome of Burkholderia cenocepacia J2315, an epidemic pathogen of cystic fibrosis patients.</title>
        <authorList>
            <person name="Holden M.T."/>
            <person name="Seth-Smith H.M."/>
            <person name="Crossman L.C."/>
            <person name="Sebaihia M."/>
            <person name="Bentley S.D."/>
            <person name="Cerdeno-Tarraga A.M."/>
            <person name="Thomson N.R."/>
            <person name="Bason N."/>
            <person name="Quail M.A."/>
            <person name="Sharp S."/>
            <person name="Cherevach I."/>
            <person name="Churcher C."/>
            <person name="Goodhead I."/>
            <person name="Hauser H."/>
            <person name="Holroyd N."/>
            <person name="Mungall K."/>
            <person name="Scott P."/>
            <person name="Walker D."/>
            <person name="White B."/>
            <person name="Rose H."/>
            <person name="Iversen P."/>
            <person name="Mil-Homens D."/>
            <person name="Rocha E.P."/>
            <person name="Fialho A.M."/>
            <person name="Baldwin A."/>
            <person name="Dowson C."/>
            <person name="Barrell B.G."/>
            <person name="Govan J.R."/>
            <person name="Vandamme P."/>
            <person name="Hart C.A."/>
            <person name="Mahenthiralingam E."/>
            <person name="Parkhill J."/>
        </authorList>
    </citation>
    <scope>NUCLEOTIDE SEQUENCE [LARGE SCALE GENOMIC DNA]</scope>
    <source>
        <strain>ATCC BAA-245 / DSM 16553 / LMG 16656 / NCTC 13227 / J2315 / CF5610</strain>
    </source>
</reference>
<evidence type="ECO:0000255" key="1">
    <source>
        <dbReference type="HAMAP-Rule" id="MF_01309"/>
    </source>
</evidence>
<evidence type="ECO:0000256" key="2">
    <source>
        <dbReference type="SAM" id="MobiDB-lite"/>
    </source>
</evidence>
<evidence type="ECO:0000305" key="3"/>
<organism>
    <name type="scientific">Burkholderia cenocepacia (strain ATCC BAA-245 / DSM 16553 / LMG 16656 / NCTC 13227 / J2315 / CF5610)</name>
    <name type="common">Burkholderia cepacia (strain J2315)</name>
    <dbReference type="NCBI Taxonomy" id="216591"/>
    <lineage>
        <taxon>Bacteria</taxon>
        <taxon>Pseudomonadati</taxon>
        <taxon>Pseudomonadota</taxon>
        <taxon>Betaproteobacteria</taxon>
        <taxon>Burkholderiales</taxon>
        <taxon>Burkholderiaceae</taxon>
        <taxon>Burkholderia</taxon>
        <taxon>Burkholderia cepacia complex</taxon>
    </lineage>
</organism>